<dbReference type="EC" id="3.6.1.73" evidence="1"/>
<dbReference type="EMBL" id="CP001402">
    <property type="protein sequence ID" value="ACR40684.1"/>
    <property type="molecule type" value="Genomic_DNA"/>
</dbReference>
<dbReference type="RefSeq" id="WP_012718325.1">
    <property type="nucleotide sequence ID" value="NC_012726.1"/>
</dbReference>
<dbReference type="SMR" id="C4KJG4"/>
<dbReference type="KEGG" id="sid:M164_0048"/>
<dbReference type="HOGENOM" id="CLU_087417_0_0_2"/>
<dbReference type="Proteomes" id="UP000001479">
    <property type="component" value="Chromosome"/>
</dbReference>
<dbReference type="GO" id="GO:0103023">
    <property type="term" value="F:ITPase activity"/>
    <property type="evidence" value="ECO:0007669"/>
    <property type="project" value="UniProtKB-EC"/>
</dbReference>
<dbReference type="GO" id="GO:0046872">
    <property type="term" value="F:metal ion binding"/>
    <property type="evidence" value="ECO:0007669"/>
    <property type="project" value="UniProtKB-KW"/>
</dbReference>
<dbReference type="GO" id="GO:0000166">
    <property type="term" value="F:nucleotide binding"/>
    <property type="evidence" value="ECO:0007669"/>
    <property type="project" value="UniProtKB-KW"/>
</dbReference>
<dbReference type="GO" id="GO:0017111">
    <property type="term" value="F:ribonucleoside triphosphate phosphatase activity"/>
    <property type="evidence" value="ECO:0000250"/>
    <property type="project" value="UniProtKB"/>
</dbReference>
<dbReference type="GO" id="GO:0009117">
    <property type="term" value="P:nucleotide metabolic process"/>
    <property type="evidence" value="ECO:0007669"/>
    <property type="project" value="UniProtKB-KW"/>
</dbReference>
<dbReference type="GO" id="GO:0006772">
    <property type="term" value="P:thiamine metabolic process"/>
    <property type="evidence" value="ECO:0007669"/>
    <property type="project" value="TreeGrafter"/>
</dbReference>
<dbReference type="FunFam" id="3.90.950.10:FF:000002">
    <property type="entry name" value="Inosine/xanthosine triphosphatase"/>
    <property type="match status" value="1"/>
</dbReference>
<dbReference type="Gene3D" id="3.90.950.10">
    <property type="match status" value="1"/>
</dbReference>
<dbReference type="HAMAP" id="MF_00648">
    <property type="entry name" value="Non_canon_purine_NTPase_YjjX"/>
    <property type="match status" value="1"/>
</dbReference>
<dbReference type="InterPro" id="IPR029001">
    <property type="entry name" value="ITPase-like_fam"/>
</dbReference>
<dbReference type="InterPro" id="IPR002786">
    <property type="entry name" value="Non_canon_purine_NTPase"/>
</dbReference>
<dbReference type="InterPro" id="IPR026533">
    <property type="entry name" value="NTPase/PRRC1"/>
</dbReference>
<dbReference type="InterPro" id="IPR050299">
    <property type="entry name" value="YjjX_NTPase"/>
</dbReference>
<dbReference type="PANTHER" id="PTHR34699">
    <property type="match status" value="1"/>
</dbReference>
<dbReference type="PANTHER" id="PTHR34699:SF2">
    <property type="entry name" value="NON-CANONICAL PURINE NTP PHOSPHATASE_PRRC1 DOMAIN-CONTAINING PROTEIN"/>
    <property type="match status" value="1"/>
</dbReference>
<dbReference type="Pfam" id="PF01931">
    <property type="entry name" value="NTPase_I-T"/>
    <property type="match status" value="1"/>
</dbReference>
<dbReference type="SUPFAM" id="SSF52972">
    <property type="entry name" value="ITPase-like"/>
    <property type="match status" value="1"/>
</dbReference>
<comment type="function">
    <text evidence="1">Phosphatase that hydrolyzes non-canonical purine nucleotides such as XTP and ITP to their respective diphosphate derivatives. Probably excludes non-canonical purines from DNA/RNA precursor pool, thus preventing their incorporation into DNA/RNA and avoiding chromosomal lesions.</text>
</comment>
<comment type="catalytic activity">
    <reaction evidence="1">
        <text>XTP + H2O = XDP + phosphate + H(+)</text>
        <dbReference type="Rhea" id="RHEA:28406"/>
        <dbReference type="ChEBI" id="CHEBI:15377"/>
        <dbReference type="ChEBI" id="CHEBI:15378"/>
        <dbReference type="ChEBI" id="CHEBI:43474"/>
        <dbReference type="ChEBI" id="CHEBI:59884"/>
        <dbReference type="ChEBI" id="CHEBI:61314"/>
        <dbReference type="EC" id="3.6.1.73"/>
    </reaction>
</comment>
<comment type="catalytic activity">
    <reaction evidence="1">
        <text>ITP + H2O = IDP + phosphate + H(+)</text>
        <dbReference type="Rhea" id="RHEA:28330"/>
        <dbReference type="ChEBI" id="CHEBI:15377"/>
        <dbReference type="ChEBI" id="CHEBI:15378"/>
        <dbReference type="ChEBI" id="CHEBI:43474"/>
        <dbReference type="ChEBI" id="CHEBI:58280"/>
        <dbReference type="ChEBI" id="CHEBI:61402"/>
        <dbReference type="EC" id="3.6.1.73"/>
    </reaction>
</comment>
<comment type="cofactor">
    <cofactor evidence="1">
        <name>Mg(2+)</name>
        <dbReference type="ChEBI" id="CHEBI:18420"/>
    </cofactor>
    <cofactor evidence="1">
        <name>Mn(2+)</name>
        <dbReference type="ChEBI" id="CHEBI:29035"/>
    </cofactor>
    <text evidence="1">Binds 1 divalent metal cation per subunit; can use either Mg(2+) or Mn(2+).</text>
</comment>
<comment type="subunit">
    <text evidence="1">Homodimer.</text>
</comment>
<comment type="similarity">
    <text evidence="1">Belongs to the YjjX NTPase family.</text>
</comment>
<proteinExistence type="inferred from homology"/>
<name>NCPP_SACI6</name>
<gene>
    <name type="ordered locus">M164_0048</name>
</gene>
<keyword id="KW-0378">Hydrolase</keyword>
<keyword id="KW-0460">Magnesium</keyword>
<keyword id="KW-0464">Manganese</keyword>
<keyword id="KW-0479">Metal-binding</keyword>
<keyword id="KW-0546">Nucleotide metabolism</keyword>
<keyword id="KW-0547">Nucleotide-binding</keyword>
<organism>
    <name type="scientific">Saccharolobus islandicus (strain M.16.4 / Kamchatka #3)</name>
    <name type="common">Sulfolobus islandicus</name>
    <dbReference type="NCBI Taxonomy" id="426118"/>
    <lineage>
        <taxon>Archaea</taxon>
        <taxon>Thermoproteota</taxon>
        <taxon>Thermoprotei</taxon>
        <taxon>Sulfolobales</taxon>
        <taxon>Sulfolobaceae</taxon>
        <taxon>Saccharolobus</taxon>
    </lineage>
</organism>
<accession>C4KJG4</accession>
<reference key="1">
    <citation type="journal article" date="2009" name="Proc. Natl. Acad. Sci. U.S.A.">
        <title>Biogeography of the Sulfolobus islandicus pan-genome.</title>
        <authorList>
            <person name="Reno M.L."/>
            <person name="Held N.L."/>
            <person name="Fields C.J."/>
            <person name="Burke P.V."/>
            <person name="Whitaker R.J."/>
        </authorList>
    </citation>
    <scope>NUCLEOTIDE SEQUENCE [LARGE SCALE GENOMIC DNA]</scope>
    <source>
        <strain>M.16.4 / Kamchatka #3</strain>
    </source>
</reference>
<protein>
    <recommendedName>
        <fullName evidence="1">Probable inosine/xanthosine triphosphatase</fullName>
        <shortName evidence="1">ITPase/XTPase</shortName>
        <ecNumber evidence="1">3.6.1.73</ecNumber>
    </recommendedName>
    <alternativeName>
        <fullName evidence="1">Non-canonical purine NTP phosphatase</fullName>
    </alternativeName>
    <alternativeName>
        <fullName evidence="1">Non-standard purine NTP phosphatase</fullName>
    </alternativeName>
    <alternativeName>
        <fullName evidence="1">Nucleoside-triphosphate phosphatase</fullName>
        <shortName evidence="1">NTPase</shortName>
    </alternativeName>
</protein>
<evidence type="ECO:0000255" key="1">
    <source>
        <dbReference type="HAMAP-Rule" id="MF_00648"/>
    </source>
</evidence>
<sequence>MVTIALGSRNPVKINATKEALDVLKLNWDLIGIEVDSGVDKQPFCDQTYVGARNRALNVIRVTNADIGLGIEGGVCNVYGKFIANAVVYVITKEGLENFAISSSFTLPSSMVSLILQGKELGEASDIIFKTNNSKTKEGAIGLLTNNVINRKMLYVQPIVLALYPIYNTMINNTPF</sequence>
<feature type="chain" id="PRO_1000212392" description="Probable inosine/xanthosine triphosphatase">
    <location>
        <begin position="1"/>
        <end position="176"/>
    </location>
</feature>
<feature type="binding site" evidence="1">
    <location>
        <position position="36"/>
    </location>
    <ligand>
        <name>Mg(2+)</name>
        <dbReference type="ChEBI" id="CHEBI:18420"/>
    </ligand>
</feature>